<feature type="chain" id="PRO_0000076980" description="Neuronal acetylcholine receptor subunit beta-2">
    <location>
        <begin position="1" status="less than"/>
        <end position="459"/>
    </location>
</feature>
<feature type="topological domain" description="Extracellular" evidence="4">
    <location>
        <begin position="1" status="less than"/>
        <end position="203"/>
    </location>
</feature>
<feature type="transmembrane region" description="Helical" evidence="4">
    <location>
        <begin position="204"/>
        <end position="228"/>
    </location>
</feature>
<feature type="topological domain" description="Cytoplasmic" evidence="4">
    <location>
        <begin position="229"/>
        <end position="235"/>
    </location>
</feature>
<feature type="transmembrane region" description="Helical" evidence="4">
    <location>
        <begin position="236"/>
        <end position="254"/>
    </location>
</feature>
<feature type="topological domain" description="Extracellular" evidence="4">
    <location>
        <begin position="255"/>
        <end position="269"/>
    </location>
</feature>
<feature type="transmembrane region" description="Helical" evidence="4">
    <location>
        <begin position="270"/>
        <end position="291"/>
    </location>
</feature>
<feature type="topological domain" description="Cytoplasmic" evidence="4">
    <location>
        <begin position="292"/>
        <end position="421"/>
    </location>
</feature>
<feature type="transmembrane region" description="Helical" evidence="4">
    <location>
        <begin position="422"/>
        <end position="440"/>
    </location>
</feature>
<feature type="site" description="Key residue that may interfere with effective access of the conotoxin BuIA to the channel binding site" evidence="2">
    <location>
        <position position="54"/>
    </location>
</feature>
<feature type="site" description="Key residue for a rapid dissociation (K(off)) from the conotoxin BuIA" evidence="2">
    <location>
        <position position="106"/>
    </location>
</feature>
<feature type="site" description="Key residue for a rapid dissociation (K(off)) from the conotoxin BuIA" evidence="2">
    <location>
        <position position="114"/>
    </location>
</feature>
<feature type="glycosylation site" description="N-linked (GlcNAc...) asparagine" evidence="4">
    <location>
        <position position="21"/>
    </location>
</feature>
<feature type="glycosylation site" description="N-linked (GlcNAc...) asparagine" evidence="4">
    <location>
        <position position="138"/>
    </location>
</feature>
<feature type="disulfide bond" evidence="3">
    <location>
        <begin position="125"/>
        <end position="139"/>
    </location>
</feature>
<feature type="non-terminal residue">
    <location>
        <position position="1"/>
    </location>
</feature>
<sequence>LRSDFLLGPERYNKLIRPAVNKSQQVTIGIKVSLAQLISVNEREQIMTTNVWLTQEWTDYRLVWDPNEYEGIKKLRIPSQHIWLPDIVLYNNADGVYEVSFYCNAVVSNTGDIFWLPPAIYKSACAIEVRNFPFDQQNCTLKFRSWTYDRTELDLVLTSDFASRDDYTPSGEWDIVSLPGRKNEDPNDLTYLDITYDFVIKRKPLFYTINLIIPCVLITSLAILVFYLPSDCGEKVTLCMSVLLALTVFLLLISKIVPPTSLAVPLIGKYLMFTMVLVTFSIVTSVCVLNVHHRSPSTHYMPEWVKCVFLHKLPAFLLMRRPGRSNVRERFRRKHQRKSFSSHQDGDSFFLTDDPGRVCGAWRVGDLPEGSEFRQRVKVRHDQDVDEAIDGVRFIAEHMKIEDDDEGIIEDWKYVAMVIDRLFLWIFILVCVVGTLGLFVQPLFQSYNTPVAEEVYGDF</sequence>
<name>ACHB2_CARAU</name>
<evidence type="ECO:0000250" key="1">
    <source>
        <dbReference type="UniProtKB" id="P04758"/>
    </source>
</evidence>
<evidence type="ECO:0000250" key="2">
    <source>
        <dbReference type="UniProtKB" id="P12390"/>
    </source>
</evidence>
<evidence type="ECO:0000250" key="3">
    <source>
        <dbReference type="UniProtKB" id="P17787"/>
    </source>
</evidence>
<evidence type="ECO:0000255" key="4"/>
<evidence type="ECO:0000305" key="5"/>
<proteinExistence type="evidence at transcript level"/>
<comment type="function">
    <text evidence="3">Component of neuronal acetylcholine receptors (nAChRs) that function as pentameric, ligand-gated cation channels with high calcium permeability among other activities. nAChRs are excitatory neurotrasnmitter receptors formed by a collection of nAChR subunits known to mediate synaptic transmission in the nervous system and the neuromuscular junction. Each nAchR subunit confers differential attributes to channel properties, including activation, deactivation and desensitization kinetics, pH sensitivity, cation permeability, and binding to allosteric modulators. CHRNB2 forms heteropentameric neuronal acetylcholine receptors with CHRNA2, CHRNA3, CHRNA4 and CHRNA6, as well as CHRNA5 and CHRNB3 as accesory subunits.</text>
</comment>
<comment type="catalytic activity">
    <reaction evidence="3">
        <text>Ca(2+)(in) = Ca(2+)(out)</text>
        <dbReference type="Rhea" id="RHEA:29671"/>
        <dbReference type="ChEBI" id="CHEBI:29108"/>
    </reaction>
</comment>
<comment type="catalytic activity">
    <reaction evidence="1">
        <text>K(+)(in) = K(+)(out)</text>
        <dbReference type="Rhea" id="RHEA:29463"/>
        <dbReference type="ChEBI" id="CHEBI:29103"/>
    </reaction>
</comment>
<comment type="catalytic activity">
    <reaction evidence="3">
        <text>Na(+)(in) = Na(+)(out)</text>
        <dbReference type="Rhea" id="RHEA:34963"/>
        <dbReference type="ChEBI" id="CHEBI:29101"/>
    </reaction>
</comment>
<comment type="activity regulation">
    <text evidence="3">Activated by a myriad of ligands such as acetylcholine, cytisine, nicotine, choline and epibatidine. nAChR activity is inhibited by the antagonist alpha-conotoxins BuIA, PnIA, PnIC, GID and MII, small disulfide-constrained peptides from cone snails.</text>
</comment>
<comment type="subunit">
    <text evidence="2 3">Neuronal AChR is a heteropentamer composed of two different types of subunits: alpha and beta. CHRNB2/Beta-2 subunit can be combined to CHRNA2/alpha-2, CHRNA3/alpha-3 or CHRNA4/alpha-4, CHRNA5/alpha-5, CHRNA6/alpha-6 and CHRNB3/beta-3 to give rise to functional receptors.</text>
</comment>
<comment type="subcellular location">
    <subcellularLocation>
        <location evidence="2">Synaptic cell membrane</location>
        <topology evidence="4">Multi-pass membrane protein</topology>
    </subcellularLocation>
    <subcellularLocation>
        <location evidence="3">Cell membrane</location>
        <topology evidence="4">Multi-pass membrane protein</topology>
    </subcellularLocation>
</comment>
<comment type="similarity">
    <text evidence="5">Belongs to the ligand-gated ion channel (TC 1.A.9) family. Acetylcholine receptor (TC 1.A.9.1) subfamily. Beta-2/CHRNB2 sub-subfamily.</text>
</comment>
<gene>
    <name type="primary">chrnb2</name>
</gene>
<organism>
    <name type="scientific">Carassius auratus</name>
    <name type="common">Goldfish</name>
    <dbReference type="NCBI Taxonomy" id="7957"/>
    <lineage>
        <taxon>Eukaryota</taxon>
        <taxon>Metazoa</taxon>
        <taxon>Chordata</taxon>
        <taxon>Craniata</taxon>
        <taxon>Vertebrata</taxon>
        <taxon>Euteleostomi</taxon>
        <taxon>Actinopterygii</taxon>
        <taxon>Neopterygii</taxon>
        <taxon>Teleostei</taxon>
        <taxon>Ostariophysi</taxon>
        <taxon>Cypriniformes</taxon>
        <taxon>Cyprinidae</taxon>
        <taxon>Cyprininae</taxon>
        <taxon>Carassius</taxon>
    </lineage>
</organism>
<reference key="1">
    <citation type="journal article" date="1990" name="Nucleic Acids Res.">
        <title>Nucleotide and deduced amino acid sequence of the goldfish neural nicotinic acetylcholine receptor beta-2 subunit.</title>
        <authorList>
            <person name="Hieber V.C."/>
            <person name="Bouchey J.E."/>
            <person name="Agranoff B.W."/>
            <person name="Goldman D."/>
        </authorList>
    </citation>
    <scope>NUCLEOTIDE SEQUENCE [MRNA]</scope>
    <source>
        <tissue>Retina</tissue>
    </source>
</reference>
<accession>P19370</accession>
<protein>
    <recommendedName>
        <fullName>Neuronal acetylcholine receptor subunit beta-2</fullName>
    </recommendedName>
    <alternativeName>
        <fullName>GF-beta-2</fullName>
    </alternativeName>
</protein>
<keyword id="KW-1003">Cell membrane</keyword>
<keyword id="KW-1015">Disulfide bond</keyword>
<keyword id="KW-0325">Glycoprotein</keyword>
<keyword id="KW-0407">Ion channel</keyword>
<keyword id="KW-0406">Ion transport</keyword>
<keyword id="KW-1071">Ligand-gated ion channel</keyword>
<keyword id="KW-0472">Membrane</keyword>
<keyword id="KW-0675">Receptor</keyword>
<keyword id="KW-1185">Reference proteome</keyword>
<keyword id="KW-0770">Synapse</keyword>
<keyword id="KW-0812">Transmembrane</keyword>
<keyword id="KW-1133">Transmembrane helix</keyword>
<keyword id="KW-0813">Transport</keyword>
<dbReference type="EMBL" id="X54052">
    <property type="protein sequence ID" value="CAA37986.1"/>
    <property type="molecule type" value="mRNA"/>
</dbReference>
<dbReference type="PIR" id="S14703">
    <property type="entry name" value="S14703"/>
</dbReference>
<dbReference type="SMR" id="P19370"/>
<dbReference type="GlyCosmos" id="P19370">
    <property type="glycosylation" value="2 sites, No reported glycans"/>
</dbReference>
<dbReference type="Proteomes" id="UP000515129">
    <property type="component" value="Unplaced"/>
</dbReference>
<dbReference type="GO" id="GO:0005892">
    <property type="term" value="C:acetylcholine-gated channel complex"/>
    <property type="evidence" value="ECO:0000250"/>
    <property type="project" value="UniProtKB"/>
</dbReference>
<dbReference type="GO" id="GO:0045211">
    <property type="term" value="C:postsynaptic membrane"/>
    <property type="evidence" value="ECO:0007669"/>
    <property type="project" value="UniProtKB-KW"/>
</dbReference>
<dbReference type="GO" id="GO:0042166">
    <property type="term" value="F:acetylcholine binding"/>
    <property type="evidence" value="ECO:0000250"/>
    <property type="project" value="UniProtKB"/>
</dbReference>
<dbReference type="GO" id="GO:0015464">
    <property type="term" value="F:acetylcholine receptor activity"/>
    <property type="evidence" value="ECO:0000250"/>
    <property type="project" value="UniProtKB"/>
</dbReference>
<dbReference type="GO" id="GO:0022848">
    <property type="term" value="F:acetylcholine-gated monoatomic cation-selective channel activity"/>
    <property type="evidence" value="ECO:0000250"/>
    <property type="project" value="UniProtKB"/>
</dbReference>
<dbReference type="GO" id="GO:0095500">
    <property type="term" value="P:acetylcholine receptor signaling pathway"/>
    <property type="evidence" value="ECO:0000250"/>
    <property type="project" value="UniProtKB"/>
</dbReference>
<dbReference type="GO" id="GO:0035095">
    <property type="term" value="P:behavioral response to nicotine"/>
    <property type="evidence" value="ECO:0000250"/>
    <property type="project" value="UniProtKB"/>
</dbReference>
<dbReference type="GO" id="GO:0050890">
    <property type="term" value="P:cognition"/>
    <property type="evidence" value="ECO:0000250"/>
    <property type="project" value="UniProtKB"/>
</dbReference>
<dbReference type="GO" id="GO:0007613">
    <property type="term" value="P:memory"/>
    <property type="evidence" value="ECO:0000250"/>
    <property type="project" value="UniProtKB"/>
</dbReference>
<dbReference type="GO" id="GO:0050877">
    <property type="term" value="P:nervous system process"/>
    <property type="evidence" value="ECO:0000250"/>
    <property type="project" value="UniProtKB"/>
</dbReference>
<dbReference type="GO" id="GO:0001666">
    <property type="term" value="P:response to hypoxia"/>
    <property type="evidence" value="ECO:0000250"/>
    <property type="project" value="UniProtKB"/>
</dbReference>
<dbReference type="GO" id="GO:0007165">
    <property type="term" value="P:signal transduction"/>
    <property type="evidence" value="ECO:0000250"/>
    <property type="project" value="UniProtKB"/>
</dbReference>
<dbReference type="GO" id="GO:0007271">
    <property type="term" value="P:synaptic transmission, cholinergic"/>
    <property type="evidence" value="ECO:0000250"/>
    <property type="project" value="UniProtKB"/>
</dbReference>
<dbReference type="GO" id="GO:0008542">
    <property type="term" value="P:visual learning"/>
    <property type="evidence" value="ECO:0000250"/>
    <property type="project" value="UniProtKB"/>
</dbReference>
<dbReference type="CDD" id="cd19025">
    <property type="entry name" value="LGIC_ECD_nAChR_B2"/>
    <property type="match status" value="1"/>
</dbReference>
<dbReference type="CDD" id="cd19064">
    <property type="entry name" value="LGIC_TM_nAChR"/>
    <property type="match status" value="1"/>
</dbReference>
<dbReference type="FunFam" id="2.70.170.10:FF:000006">
    <property type="entry name" value="Cholinergic receptor nicotinic beta 2 subunit"/>
    <property type="match status" value="1"/>
</dbReference>
<dbReference type="FunFam" id="1.20.58.390:FF:000008">
    <property type="entry name" value="Cholinergic receptor nicotinic beta 4 subunit"/>
    <property type="match status" value="1"/>
</dbReference>
<dbReference type="FunFam" id="1.20.58.390:FF:000034">
    <property type="entry name" value="Cholinergic receptor nicotinic beta 4 subunit"/>
    <property type="match status" value="1"/>
</dbReference>
<dbReference type="Gene3D" id="2.70.170.10">
    <property type="entry name" value="Neurotransmitter-gated ion-channel ligand-binding domain"/>
    <property type="match status" value="1"/>
</dbReference>
<dbReference type="Gene3D" id="1.20.58.390">
    <property type="entry name" value="Neurotransmitter-gated ion-channel transmembrane domain"/>
    <property type="match status" value="2"/>
</dbReference>
<dbReference type="InterPro" id="IPR006202">
    <property type="entry name" value="Neur_chan_lig-bd"/>
</dbReference>
<dbReference type="InterPro" id="IPR036734">
    <property type="entry name" value="Neur_chan_lig-bd_sf"/>
</dbReference>
<dbReference type="InterPro" id="IPR006201">
    <property type="entry name" value="Neur_channel"/>
</dbReference>
<dbReference type="InterPro" id="IPR036719">
    <property type="entry name" value="Neuro-gated_channel_TM_sf"/>
</dbReference>
<dbReference type="InterPro" id="IPR038050">
    <property type="entry name" value="Neuro_actylchol_rec"/>
</dbReference>
<dbReference type="InterPro" id="IPR006029">
    <property type="entry name" value="Neurotrans-gated_channel_TM"/>
</dbReference>
<dbReference type="InterPro" id="IPR018000">
    <property type="entry name" value="Neurotransmitter_ion_chnl_CS"/>
</dbReference>
<dbReference type="InterPro" id="IPR002394">
    <property type="entry name" value="Nicotinic_acetylcholine_rcpt"/>
</dbReference>
<dbReference type="NCBIfam" id="TIGR00860">
    <property type="entry name" value="LIC"/>
    <property type="match status" value="1"/>
</dbReference>
<dbReference type="PANTHER" id="PTHR18945">
    <property type="entry name" value="NEUROTRANSMITTER GATED ION CHANNEL"/>
    <property type="match status" value="1"/>
</dbReference>
<dbReference type="Pfam" id="PF02931">
    <property type="entry name" value="Neur_chan_LBD"/>
    <property type="match status" value="1"/>
</dbReference>
<dbReference type="Pfam" id="PF02932">
    <property type="entry name" value="Neur_chan_memb"/>
    <property type="match status" value="1"/>
</dbReference>
<dbReference type="PRINTS" id="PR00254">
    <property type="entry name" value="NICOTINICR"/>
</dbReference>
<dbReference type="PRINTS" id="PR00252">
    <property type="entry name" value="NRIONCHANNEL"/>
</dbReference>
<dbReference type="SUPFAM" id="SSF90112">
    <property type="entry name" value="Neurotransmitter-gated ion-channel transmembrane pore"/>
    <property type="match status" value="1"/>
</dbReference>
<dbReference type="SUPFAM" id="SSF63712">
    <property type="entry name" value="Nicotinic receptor ligand binding domain-like"/>
    <property type="match status" value="1"/>
</dbReference>
<dbReference type="PROSITE" id="PS00236">
    <property type="entry name" value="NEUROTR_ION_CHANNEL"/>
    <property type="match status" value="1"/>
</dbReference>